<dbReference type="EC" id="4.2.3.5" evidence="1"/>
<dbReference type="EMBL" id="AL766850">
    <property type="protein sequence ID" value="CAD47106.1"/>
    <property type="molecule type" value="Genomic_DNA"/>
</dbReference>
<dbReference type="RefSeq" id="WP_001269901.1">
    <property type="nucleotide sequence ID" value="NC_004368.1"/>
</dbReference>
<dbReference type="SMR" id="Q8E4F4"/>
<dbReference type="KEGG" id="san:aroC"/>
<dbReference type="eggNOG" id="COG0082">
    <property type="taxonomic scope" value="Bacteria"/>
</dbReference>
<dbReference type="HOGENOM" id="CLU_034547_2_0_9"/>
<dbReference type="UniPathway" id="UPA00053">
    <property type="reaction ID" value="UER00090"/>
</dbReference>
<dbReference type="Proteomes" id="UP000000823">
    <property type="component" value="Chromosome"/>
</dbReference>
<dbReference type="GO" id="GO:0005829">
    <property type="term" value="C:cytosol"/>
    <property type="evidence" value="ECO:0007669"/>
    <property type="project" value="TreeGrafter"/>
</dbReference>
<dbReference type="GO" id="GO:0004107">
    <property type="term" value="F:chorismate synthase activity"/>
    <property type="evidence" value="ECO:0007669"/>
    <property type="project" value="UniProtKB-UniRule"/>
</dbReference>
<dbReference type="GO" id="GO:0010181">
    <property type="term" value="F:FMN binding"/>
    <property type="evidence" value="ECO:0007669"/>
    <property type="project" value="TreeGrafter"/>
</dbReference>
<dbReference type="GO" id="GO:0008652">
    <property type="term" value="P:amino acid biosynthetic process"/>
    <property type="evidence" value="ECO:0007669"/>
    <property type="project" value="UniProtKB-KW"/>
</dbReference>
<dbReference type="GO" id="GO:0009073">
    <property type="term" value="P:aromatic amino acid family biosynthetic process"/>
    <property type="evidence" value="ECO:0007669"/>
    <property type="project" value="UniProtKB-KW"/>
</dbReference>
<dbReference type="GO" id="GO:0009423">
    <property type="term" value="P:chorismate biosynthetic process"/>
    <property type="evidence" value="ECO:0007669"/>
    <property type="project" value="UniProtKB-UniRule"/>
</dbReference>
<dbReference type="CDD" id="cd07304">
    <property type="entry name" value="Chorismate_synthase"/>
    <property type="match status" value="1"/>
</dbReference>
<dbReference type="FunFam" id="3.60.150.10:FF:000002">
    <property type="entry name" value="Chorismate synthase"/>
    <property type="match status" value="1"/>
</dbReference>
<dbReference type="Gene3D" id="3.60.150.10">
    <property type="entry name" value="Chorismate synthase AroC"/>
    <property type="match status" value="1"/>
</dbReference>
<dbReference type="HAMAP" id="MF_00300">
    <property type="entry name" value="Chorismate_synth"/>
    <property type="match status" value="1"/>
</dbReference>
<dbReference type="InterPro" id="IPR000453">
    <property type="entry name" value="Chorismate_synth"/>
</dbReference>
<dbReference type="InterPro" id="IPR035904">
    <property type="entry name" value="Chorismate_synth_AroC_sf"/>
</dbReference>
<dbReference type="InterPro" id="IPR020541">
    <property type="entry name" value="Chorismate_synthase_CS"/>
</dbReference>
<dbReference type="NCBIfam" id="TIGR00033">
    <property type="entry name" value="aroC"/>
    <property type="match status" value="1"/>
</dbReference>
<dbReference type="NCBIfam" id="NF003793">
    <property type="entry name" value="PRK05382.1"/>
    <property type="match status" value="1"/>
</dbReference>
<dbReference type="PANTHER" id="PTHR21085">
    <property type="entry name" value="CHORISMATE SYNTHASE"/>
    <property type="match status" value="1"/>
</dbReference>
<dbReference type="PANTHER" id="PTHR21085:SF0">
    <property type="entry name" value="CHORISMATE SYNTHASE"/>
    <property type="match status" value="1"/>
</dbReference>
<dbReference type="Pfam" id="PF01264">
    <property type="entry name" value="Chorismate_synt"/>
    <property type="match status" value="1"/>
</dbReference>
<dbReference type="PIRSF" id="PIRSF001456">
    <property type="entry name" value="Chorismate_synth"/>
    <property type="match status" value="1"/>
</dbReference>
<dbReference type="SUPFAM" id="SSF103263">
    <property type="entry name" value="Chorismate synthase, AroC"/>
    <property type="match status" value="1"/>
</dbReference>
<dbReference type="PROSITE" id="PS00787">
    <property type="entry name" value="CHORISMATE_SYNTHASE_1"/>
    <property type="match status" value="1"/>
</dbReference>
<dbReference type="PROSITE" id="PS00788">
    <property type="entry name" value="CHORISMATE_SYNTHASE_2"/>
    <property type="match status" value="1"/>
</dbReference>
<dbReference type="PROSITE" id="PS00789">
    <property type="entry name" value="CHORISMATE_SYNTHASE_3"/>
    <property type="match status" value="1"/>
</dbReference>
<protein>
    <recommendedName>
        <fullName evidence="1">Chorismate synthase</fullName>
        <shortName evidence="1">CS</shortName>
        <ecNumber evidence="1">4.2.3.5</ecNumber>
    </recommendedName>
    <alternativeName>
        <fullName evidence="1">5-enolpyruvylshikimate-3-phosphate phospholyase</fullName>
    </alternativeName>
</protein>
<proteinExistence type="inferred from homology"/>
<accession>Q8E4F4</accession>
<organism>
    <name type="scientific">Streptococcus agalactiae serotype III (strain NEM316)</name>
    <dbReference type="NCBI Taxonomy" id="211110"/>
    <lineage>
        <taxon>Bacteria</taxon>
        <taxon>Bacillati</taxon>
        <taxon>Bacillota</taxon>
        <taxon>Bacilli</taxon>
        <taxon>Lactobacillales</taxon>
        <taxon>Streptococcaceae</taxon>
        <taxon>Streptococcus</taxon>
    </lineage>
</organism>
<name>AROC_STRA3</name>
<reference key="1">
    <citation type="journal article" date="2002" name="Mol. Microbiol.">
        <title>Genome sequence of Streptococcus agalactiae, a pathogen causing invasive neonatal disease.</title>
        <authorList>
            <person name="Glaser P."/>
            <person name="Rusniok C."/>
            <person name="Buchrieser C."/>
            <person name="Chevalier F."/>
            <person name="Frangeul L."/>
            <person name="Msadek T."/>
            <person name="Zouine M."/>
            <person name="Couve E."/>
            <person name="Lalioui L."/>
            <person name="Poyart C."/>
            <person name="Trieu-Cuot P."/>
            <person name="Kunst F."/>
        </authorList>
    </citation>
    <scope>NUCLEOTIDE SEQUENCE [LARGE SCALE GENOMIC DNA]</scope>
    <source>
        <strain>NEM316</strain>
    </source>
</reference>
<evidence type="ECO:0000255" key="1">
    <source>
        <dbReference type="HAMAP-Rule" id="MF_00300"/>
    </source>
</evidence>
<sequence length="388" mass="42639">MRYLTAGESHGPSLTAIIEGIPAGLKLSAKDINEDLKRRQGGYGRGNRMKIETDQVIISSGVRHGKTLGSPITLTVTNKDHSKWLDIMSVEDIEERLKQKRRIKHPRPGHADLVGGIKYRFDDLRNALERSSARETTMRVAIGAIAKRILKEIGIEIANHIVVFGGKEITVPDKLTVQQIKVLSSQSQVAIVNPSFEQEIKDYIDSVKKAGDTIGGVIETIVGGVPVGLGSYVHWDRKLDAKIAQAVVSINAFKGVEFGLGFKSGFLKGSQVMDSISWTKDQGYIRQSNNLGGFEGGMTNGEPIIVRGVMKPIPTLYKPLMSVDIDTHEPYRATVERSDPTALPAAGVVMEAVVATVLVTEVLEKFSSDNMYELKEAVKLYRNYVNHF</sequence>
<feature type="chain" id="PRO_0000140650" description="Chorismate synthase">
    <location>
        <begin position="1"/>
        <end position="388"/>
    </location>
</feature>
<feature type="binding site" evidence="1">
    <location>
        <position position="39"/>
    </location>
    <ligand>
        <name>NADP(+)</name>
        <dbReference type="ChEBI" id="CHEBI:58349"/>
    </ligand>
</feature>
<feature type="binding site" evidence="1">
    <location>
        <position position="45"/>
    </location>
    <ligand>
        <name>NADP(+)</name>
        <dbReference type="ChEBI" id="CHEBI:58349"/>
    </ligand>
</feature>
<feature type="binding site" evidence="1">
    <location>
        <begin position="130"/>
        <end position="132"/>
    </location>
    <ligand>
        <name>FMN</name>
        <dbReference type="ChEBI" id="CHEBI:58210"/>
    </ligand>
</feature>
<feature type="binding site" evidence="1">
    <location>
        <begin position="251"/>
        <end position="252"/>
    </location>
    <ligand>
        <name>FMN</name>
        <dbReference type="ChEBI" id="CHEBI:58210"/>
    </ligand>
</feature>
<feature type="binding site" evidence="1">
    <location>
        <position position="296"/>
    </location>
    <ligand>
        <name>FMN</name>
        <dbReference type="ChEBI" id="CHEBI:58210"/>
    </ligand>
</feature>
<feature type="binding site" evidence="1">
    <location>
        <begin position="311"/>
        <end position="315"/>
    </location>
    <ligand>
        <name>FMN</name>
        <dbReference type="ChEBI" id="CHEBI:58210"/>
    </ligand>
</feature>
<feature type="binding site" evidence="1">
    <location>
        <position position="337"/>
    </location>
    <ligand>
        <name>FMN</name>
        <dbReference type="ChEBI" id="CHEBI:58210"/>
    </ligand>
</feature>
<comment type="function">
    <text evidence="1">Catalyzes the anti-1,4-elimination of the C-3 phosphate and the C-6 proR hydrogen from 5-enolpyruvylshikimate-3-phosphate (EPSP) to yield chorismate, which is the branch point compound that serves as the starting substrate for the three terminal pathways of aromatic amino acid biosynthesis. This reaction introduces a second double bond into the aromatic ring system.</text>
</comment>
<comment type="catalytic activity">
    <reaction evidence="1">
        <text>5-O-(1-carboxyvinyl)-3-phosphoshikimate = chorismate + phosphate</text>
        <dbReference type="Rhea" id="RHEA:21020"/>
        <dbReference type="ChEBI" id="CHEBI:29748"/>
        <dbReference type="ChEBI" id="CHEBI:43474"/>
        <dbReference type="ChEBI" id="CHEBI:57701"/>
        <dbReference type="EC" id="4.2.3.5"/>
    </reaction>
</comment>
<comment type="cofactor">
    <cofactor evidence="1">
        <name>FMNH2</name>
        <dbReference type="ChEBI" id="CHEBI:57618"/>
    </cofactor>
    <text evidence="1">Reduced FMN (FMNH(2)).</text>
</comment>
<comment type="pathway">
    <text evidence="1">Metabolic intermediate biosynthesis; chorismate biosynthesis; chorismate from D-erythrose 4-phosphate and phosphoenolpyruvate: step 7/7.</text>
</comment>
<comment type="subunit">
    <text evidence="1">Homotetramer.</text>
</comment>
<comment type="similarity">
    <text evidence="1">Belongs to the chorismate synthase family.</text>
</comment>
<keyword id="KW-0028">Amino-acid biosynthesis</keyword>
<keyword id="KW-0057">Aromatic amino acid biosynthesis</keyword>
<keyword id="KW-0274">FAD</keyword>
<keyword id="KW-0285">Flavoprotein</keyword>
<keyword id="KW-0288">FMN</keyword>
<keyword id="KW-0456">Lyase</keyword>
<keyword id="KW-0521">NADP</keyword>
<gene>
    <name evidence="1" type="primary">aroC</name>
    <name type="ordered locus">gbs1447</name>
</gene>